<accession>Q2HJ66</accession>
<feature type="chain" id="PRO_0000244877" description="Gap junction gamma-1 protein">
    <location>
        <begin position="1"/>
        <end position="396"/>
    </location>
</feature>
<feature type="topological domain" description="Cytoplasmic" evidence="2">
    <location>
        <begin position="1"/>
        <end position="22"/>
    </location>
</feature>
<feature type="transmembrane region" description="Helical" evidence="2">
    <location>
        <begin position="23"/>
        <end position="45"/>
    </location>
</feature>
<feature type="topological domain" description="Extracellular" evidence="2">
    <location>
        <begin position="46"/>
        <end position="75"/>
    </location>
</feature>
<feature type="transmembrane region" description="Helical" evidence="2">
    <location>
        <begin position="76"/>
        <end position="95"/>
    </location>
</feature>
<feature type="topological domain" description="Cytoplasmic" evidence="2">
    <location>
        <begin position="96"/>
        <end position="175"/>
    </location>
</feature>
<feature type="transmembrane region" description="Helical" evidence="2">
    <location>
        <begin position="176"/>
        <end position="198"/>
    </location>
</feature>
<feature type="topological domain" description="Extracellular" evidence="2">
    <location>
        <begin position="199"/>
        <end position="228"/>
    </location>
</feature>
<feature type="transmembrane region" description="Helical" evidence="2">
    <location>
        <begin position="229"/>
        <end position="248"/>
    </location>
</feature>
<feature type="topological domain" description="Cytoplasmic" evidence="2">
    <location>
        <begin position="249"/>
        <end position="396"/>
    </location>
</feature>
<feature type="region of interest" description="Disordered" evidence="3">
    <location>
        <begin position="146"/>
        <end position="165"/>
    </location>
</feature>
<feature type="region of interest" description="Disordered" evidence="3">
    <location>
        <begin position="356"/>
        <end position="396"/>
    </location>
</feature>
<feature type="compositionally biased region" description="Basic and acidic residues" evidence="3">
    <location>
        <begin position="147"/>
        <end position="156"/>
    </location>
</feature>
<feature type="compositionally biased region" description="Low complexity" evidence="3">
    <location>
        <begin position="373"/>
        <end position="396"/>
    </location>
</feature>
<keyword id="KW-0965">Cell junction</keyword>
<keyword id="KW-1003">Cell membrane</keyword>
<keyword id="KW-0303">Gap junction</keyword>
<keyword id="KW-0472">Membrane</keyword>
<keyword id="KW-1185">Reference proteome</keyword>
<keyword id="KW-0812">Transmembrane</keyword>
<keyword id="KW-1133">Transmembrane helix</keyword>
<organism>
    <name type="scientific">Bos taurus</name>
    <name type="common">Bovine</name>
    <dbReference type="NCBI Taxonomy" id="9913"/>
    <lineage>
        <taxon>Eukaryota</taxon>
        <taxon>Metazoa</taxon>
        <taxon>Chordata</taxon>
        <taxon>Craniata</taxon>
        <taxon>Vertebrata</taxon>
        <taxon>Euteleostomi</taxon>
        <taxon>Mammalia</taxon>
        <taxon>Eutheria</taxon>
        <taxon>Laurasiatheria</taxon>
        <taxon>Artiodactyla</taxon>
        <taxon>Ruminantia</taxon>
        <taxon>Pecora</taxon>
        <taxon>Bovidae</taxon>
        <taxon>Bovinae</taxon>
        <taxon>Bos</taxon>
    </lineage>
</organism>
<reference key="1">
    <citation type="submission" date="2006-02" db="EMBL/GenBank/DDBJ databases">
        <authorList>
            <consortium name="NIH - Mammalian Gene Collection (MGC) project"/>
        </authorList>
    </citation>
    <scope>NUCLEOTIDE SEQUENCE [LARGE SCALE MRNA]</scope>
    <source>
        <strain>Hereford</strain>
        <tissue>Uterus</tissue>
    </source>
</reference>
<dbReference type="EMBL" id="BC113285">
    <property type="protein sequence ID" value="AAI13286.1"/>
    <property type="molecule type" value="mRNA"/>
</dbReference>
<dbReference type="RefSeq" id="NP_001039541.1">
    <property type="nucleotide sequence ID" value="NM_001046076.1"/>
</dbReference>
<dbReference type="RefSeq" id="XP_005220906.1">
    <property type="nucleotide sequence ID" value="XM_005220849.3"/>
</dbReference>
<dbReference type="RefSeq" id="XP_005220907.1">
    <property type="nucleotide sequence ID" value="XM_005220850.5"/>
</dbReference>
<dbReference type="RefSeq" id="XP_005220908.1">
    <property type="nucleotide sequence ID" value="XM_005220851.5"/>
</dbReference>
<dbReference type="RefSeq" id="XP_010814634.1">
    <property type="nucleotide sequence ID" value="XM_010816332.2"/>
</dbReference>
<dbReference type="RefSeq" id="XP_010814635.1">
    <property type="nucleotide sequence ID" value="XM_010816333.2"/>
</dbReference>
<dbReference type="RefSeq" id="XP_015314351.1">
    <property type="nucleotide sequence ID" value="XM_015458865.3"/>
</dbReference>
<dbReference type="SMR" id="Q2HJ66"/>
<dbReference type="FunCoup" id="Q2HJ66">
    <property type="interactions" value="276"/>
</dbReference>
<dbReference type="STRING" id="9913.ENSBTAP00000063600"/>
<dbReference type="PaxDb" id="9913-ENSBTAP00000005277"/>
<dbReference type="Ensembl" id="ENSBTAT00000087603.1">
    <property type="protein sequence ID" value="ENSBTAP00000079830.1"/>
    <property type="gene ID" value="ENSBTAG00000060625.1"/>
</dbReference>
<dbReference type="Ensembl" id="ENSBTAT00000095747.1">
    <property type="protein sequence ID" value="ENSBTAP00000102494.1"/>
    <property type="gene ID" value="ENSBTAG00000060625.1"/>
</dbReference>
<dbReference type="Ensembl" id="ENSBTAT00000096701.1">
    <property type="protein sequence ID" value="ENSBTAP00000091188.1"/>
    <property type="gene ID" value="ENSBTAG00000060625.1"/>
</dbReference>
<dbReference type="Ensembl" id="ENSBTAT00000109224.1">
    <property type="protein sequence ID" value="ENSBTAP00000080724.1"/>
    <property type="gene ID" value="ENSBTAG00000060625.1"/>
</dbReference>
<dbReference type="Ensembl" id="ENSBTAT00000111498.1">
    <property type="protein sequence ID" value="ENSBTAP00000086140.1"/>
    <property type="gene ID" value="ENSBTAG00000060625.1"/>
</dbReference>
<dbReference type="Ensembl" id="ENSBTAT00000111886.1">
    <property type="protein sequence ID" value="ENSBTAP00000082238.1"/>
    <property type="gene ID" value="ENSBTAG00000060625.1"/>
</dbReference>
<dbReference type="Ensembl" id="ENSBTAT00000121129.1">
    <property type="protein sequence ID" value="ENSBTAP00000076217.1"/>
    <property type="gene ID" value="ENSBTAG00000060625.1"/>
</dbReference>
<dbReference type="Ensembl" id="ENSBTAT00000122872.1">
    <property type="protein sequence ID" value="ENSBTAP00000096348.1"/>
    <property type="gene ID" value="ENSBTAG00000060625.1"/>
</dbReference>
<dbReference type="Ensembl" id="ENSBTAT00000126929.1">
    <property type="protein sequence ID" value="ENSBTAP00000095723.1"/>
    <property type="gene ID" value="ENSBTAG00000060625.1"/>
</dbReference>
<dbReference type="Ensembl" id="ENSBTAT00000135958.1">
    <property type="protein sequence ID" value="ENSBTAP00000093512.1"/>
    <property type="gene ID" value="ENSBTAG00000060625.1"/>
</dbReference>
<dbReference type="GeneID" id="511119"/>
<dbReference type="KEGG" id="bta:511119"/>
<dbReference type="CTD" id="10052"/>
<dbReference type="VEuPathDB" id="HostDB:ENSBTAG00000004036"/>
<dbReference type="eggNOG" id="ENOG502QV2G">
    <property type="taxonomic scope" value="Eukaryota"/>
</dbReference>
<dbReference type="GeneTree" id="ENSGT01130000278276"/>
<dbReference type="HOGENOM" id="CLU_037388_0_0_1"/>
<dbReference type="InParanoid" id="Q2HJ66"/>
<dbReference type="OMA" id="VRWKQHR"/>
<dbReference type="OrthoDB" id="8875898at2759"/>
<dbReference type="TreeFam" id="TF329606"/>
<dbReference type="Reactome" id="R-BTA-112303">
    <property type="pathway name" value="Electric Transmission Across Gap Junctions"/>
</dbReference>
<dbReference type="Reactome" id="R-BTA-190861">
    <property type="pathway name" value="Gap junction assembly"/>
</dbReference>
<dbReference type="Proteomes" id="UP000009136">
    <property type="component" value="Chromosome 19"/>
</dbReference>
<dbReference type="Bgee" id="ENSBTAG00000004036">
    <property type="expression patterns" value="Expressed in oocyte and 96 other cell types or tissues"/>
</dbReference>
<dbReference type="GO" id="GO:0005922">
    <property type="term" value="C:connexin complex"/>
    <property type="evidence" value="ECO:0000318"/>
    <property type="project" value="GO_Central"/>
</dbReference>
<dbReference type="GO" id="GO:0005783">
    <property type="term" value="C:endoplasmic reticulum"/>
    <property type="evidence" value="ECO:0007669"/>
    <property type="project" value="Ensembl"/>
</dbReference>
<dbReference type="GO" id="GO:0005654">
    <property type="term" value="C:nucleoplasm"/>
    <property type="evidence" value="ECO:0007669"/>
    <property type="project" value="Ensembl"/>
</dbReference>
<dbReference type="GO" id="GO:0045202">
    <property type="term" value="C:synapse"/>
    <property type="evidence" value="ECO:0007669"/>
    <property type="project" value="GOC"/>
</dbReference>
<dbReference type="GO" id="GO:0005243">
    <property type="term" value="F:gap junction channel activity"/>
    <property type="evidence" value="ECO:0000318"/>
    <property type="project" value="GO_Central"/>
</dbReference>
<dbReference type="GO" id="GO:0086077">
    <property type="term" value="F:gap junction channel activity involved in AV node cell-bundle of His cell electrical coupling"/>
    <property type="evidence" value="ECO:0007669"/>
    <property type="project" value="Ensembl"/>
</dbReference>
<dbReference type="GO" id="GO:0005216">
    <property type="term" value="F:monoatomic ion channel activity"/>
    <property type="evidence" value="ECO:0007669"/>
    <property type="project" value="Ensembl"/>
</dbReference>
<dbReference type="GO" id="GO:0048738">
    <property type="term" value="P:cardiac muscle tissue development"/>
    <property type="evidence" value="ECO:0007669"/>
    <property type="project" value="Ensembl"/>
</dbReference>
<dbReference type="GO" id="GO:0048468">
    <property type="term" value="P:cell development"/>
    <property type="evidence" value="ECO:0007669"/>
    <property type="project" value="Ensembl"/>
</dbReference>
<dbReference type="GO" id="GO:0007267">
    <property type="term" value="P:cell-cell signaling"/>
    <property type="evidence" value="ECO:0000318"/>
    <property type="project" value="GO_Central"/>
</dbReference>
<dbReference type="GO" id="GO:0007268">
    <property type="term" value="P:chemical synaptic transmission"/>
    <property type="evidence" value="ECO:0007669"/>
    <property type="project" value="Ensembl"/>
</dbReference>
<dbReference type="GO" id="GO:0016264">
    <property type="term" value="P:gap junction assembly"/>
    <property type="evidence" value="ECO:0007669"/>
    <property type="project" value="Ensembl"/>
</dbReference>
<dbReference type="GO" id="GO:0001570">
    <property type="term" value="P:vasculogenesis"/>
    <property type="evidence" value="ECO:0007669"/>
    <property type="project" value="Ensembl"/>
</dbReference>
<dbReference type="GO" id="GO:0007601">
    <property type="term" value="P:visual perception"/>
    <property type="evidence" value="ECO:0007669"/>
    <property type="project" value="Ensembl"/>
</dbReference>
<dbReference type="FunFam" id="1.20.1440.80:FF:000003">
    <property type="entry name" value="Gap junction protein"/>
    <property type="match status" value="1"/>
</dbReference>
<dbReference type="Gene3D" id="1.20.1440.80">
    <property type="entry name" value="Gap junction channel protein cysteine-rich domain"/>
    <property type="match status" value="1"/>
</dbReference>
<dbReference type="InterPro" id="IPR000500">
    <property type="entry name" value="Connexin"/>
</dbReference>
<dbReference type="InterPro" id="IPR002265">
    <property type="entry name" value="Connexin45"/>
</dbReference>
<dbReference type="InterPro" id="IPR019570">
    <property type="entry name" value="Connexin_CCC"/>
</dbReference>
<dbReference type="InterPro" id="IPR017990">
    <property type="entry name" value="Connexin_CS"/>
</dbReference>
<dbReference type="InterPro" id="IPR013092">
    <property type="entry name" value="Connexin_N"/>
</dbReference>
<dbReference type="InterPro" id="IPR038359">
    <property type="entry name" value="Connexin_N_sf"/>
</dbReference>
<dbReference type="PANTHER" id="PTHR11984">
    <property type="entry name" value="CONNEXIN"/>
    <property type="match status" value="1"/>
</dbReference>
<dbReference type="PANTHER" id="PTHR11984:SF6">
    <property type="entry name" value="GAP JUNCTION GAMMA-1 PROTEIN"/>
    <property type="match status" value="1"/>
</dbReference>
<dbReference type="Pfam" id="PF00029">
    <property type="entry name" value="Connexin"/>
    <property type="match status" value="1"/>
</dbReference>
<dbReference type="PRINTS" id="PR00206">
    <property type="entry name" value="CONNEXIN"/>
</dbReference>
<dbReference type="PRINTS" id="PR01136">
    <property type="entry name" value="CONNEXINA6"/>
</dbReference>
<dbReference type="SMART" id="SM00037">
    <property type="entry name" value="CNX"/>
    <property type="match status" value="1"/>
</dbReference>
<dbReference type="SMART" id="SM01089">
    <property type="entry name" value="Connexin_CCC"/>
    <property type="match status" value="1"/>
</dbReference>
<dbReference type="PROSITE" id="PS00407">
    <property type="entry name" value="CONNEXINS_1"/>
    <property type="match status" value="1"/>
</dbReference>
<dbReference type="PROSITE" id="PS00408">
    <property type="entry name" value="CONNEXINS_2"/>
    <property type="match status" value="1"/>
</dbReference>
<protein>
    <recommendedName>
        <fullName>Gap junction gamma-1 protein</fullName>
    </recommendedName>
    <alternativeName>
        <fullName>Gap junction alpha-7 protein</fullName>
    </alternativeName>
</protein>
<name>CXG1_BOVIN</name>
<proteinExistence type="evidence at transcript level"/>
<evidence type="ECO:0000250" key="1"/>
<evidence type="ECO:0000255" key="2"/>
<evidence type="ECO:0000256" key="3">
    <source>
        <dbReference type="SAM" id="MobiDB-lite"/>
    </source>
</evidence>
<evidence type="ECO:0000305" key="4"/>
<comment type="function">
    <text evidence="1">One gap junction consists of a cluster of closely packed pairs of transmembrane channels, the connexons, through which materials of low MW diffuse from one cell to a neighboring cell.</text>
</comment>
<comment type="subunit">
    <text evidence="1">A connexon is composed of a hexamer of connexins. Interacts with CNST (By similarity).</text>
</comment>
<comment type="subcellular location">
    <subcellularLocation>
        <location evidence="1">Cell membrane</location>
        <topology evidence="1">Multi-pass membrane protein</topology>
    </subcellularLocation>
    <subcellularLocation>
        <location evidence="1">Cell junction</location>
        <location evidence="1">Gap junction</location>
    </subcellularLocation>
</comment>
<comment type="similarity">
    <text evidence="4">Belongs to the connexin family. Gamma-type subfamily.</text>
</comment>
<gene>
    <name type="primary">GJC1</name>
    <name type="synonym">GJA7</name>
</gene>
<sequence length="396" mass="45553">MSWSFLTRLLEEIHNHSTFVGKIWLTVLIVFRIVLTAVGGESIYYDEQSKFVCNTEQPGCENVCYDAFAPLSHVRFWVFQIILVATPSVMYLGYAIHKIAKMEHGDADKKAARSKPYAMRWKQHRALEETEEDHEEDPMMYPEMELESEKENKDQNQSKPKHDGRRRIREDGLMKIYVLQLLARTVFEVGFLVGQYFLYGFQVHPFYVCSRLPCPHKIDCFISRPTEKTIFLLIMYGVTGLCLLLNIWEMLHLGFGTIRDSLNSKRRELEDPGAYNYPFTWNTPSAPPGYNIAVKPDQIQYTELSNAKIAYKQNKANIAQEQQYGSHEDNLPPDLETLQREIRMAQERLDLAIQAYNHQNNPHGSREKKAKVGSKAGSNKSSASSKSGDGKTSVWI</sequence>